<name>IF4H_PONAB</name>
<keyword id="KW-0007">Acetylation</keyword>
<keyword id="KW-0963">Cytoplasm</keyword>
<keyword id="KW-0396">Initiation factor</keyword>
<keyword id="KW-0488">Methylation</keyword>
<keyword id="KW-0597">Phosphoprotein</keyword>
<keyword id="KW-0648">Protein biosynthesis</keyword>
<keyword id="KW-1185">Reference proteome</keyword>
<keyword id="KW-0694">RNA-binding</keyword>
<sequence length="228" mass="25201">MADFDTYDDRAYNSFGGGRGSRGSAGGHGSRSQKELPTEPPYTAYVGNLPFNTVQGDIDAIFKDLSIRSVRLVRDKDTDKFKGFCYVEFDEVDSLKEALTYDGALLGDRSLRVDIAEGRKQDKGGFGFRKGGPDDRGFRDDFLGGRGGSRPGDRRTGPAMGSRFRDGPPLRGSNMDFREPTEEERAQRPRLQLKPRTVATPLNQVANPNSAIFGGARPREEVVQKEQE</sequence>
<proteinExistence type="evidence at transcript level"/>
<gene>
    <name type="primary">EIF4H</name>
</gene>
<comment type="function">
    <text evidence="1">Stimulates the RNA helicase activity of EIF4A in the translation initiation complex. Binds weakly mRNA (By similarity).</text>
</comment>
<comment type="subcellular location">
    <subcellularLocation>
        <location evidence="1">Cytoplasm</location>
        <location evidence="1">Perinuclear region</location>
    </subcellularLocation>
</comment>
<protein>
    <recommendedName>
        <fullName>Eukaryotic translation initiation factor 4H</fullName>
        <shortName>eIF-4H</shortName>
    </recommendedName>
</protein>
<organism>
    <name type="scientific">Pongo abelii</name>
    <name type="common">Sumatran orangutan</name>
    <name type="synonym">Pongo pygmaeus abelii</name>
    <dbReference type="NCBI Taxonomy" id="9601"/>
    <lineage>
        <taxon>Eukaryota</taxon>
        <taxon>Metazoa</taxon>
        <taxon>Chordata</taxon>
        <taxon>Craniata</taxon>
        <taxon>Vertebrata</taxon>
        <taxon>Euteleostomi</taxon>
        <taxon>Mammalia</taxon>
        <taxon>Eutheria</taxon>
        <taxon>Euarchontoglires</taxon>
        <taxon>Primates</taxon>
        <taxon>Haplorrhini</taxon>
        <taxon>Catarrhini</taxon>
        <taxon>Hominidae</taxon>
        <taxon>Pongo</taxon>
    </lineage>
</organism>
<dbReference type="EMBL" id="CR858567">
    <property type="protein sequence ID" value="CAH90792.1"/>
    <property type="molecule type" value="mRNA"/>
</dbReference>
<dbReference type="RefSeq" id="NP_001125449.1">
    <property type="nucleotide sequence ID" value="NM_001131977.2"/>
</dbReference>
<dbReference type="SMR" id="Q5RBR8"/>
<dbReference type="FunCoup" id="Q5RBR8">
    <property type="interactions" value="2176"/>
</dbReference>
<dbReference type="STRING" id="9601.ENSPPYP00000019605"/>
<dbReference type="GeneID" id="100172357"/>
<dbReference type="KEGG" id="pon:100172357"/>
<dbReference type="CTD" id="7458"/>
<dbReference type="eggNOG" id="KOG0118">
    <property type="taxonomic scope" value="Eukaryota"/>
</dbReference>
<dbReference type="InParanoid" id="Q5RBR8"/>
<dbReference type="OrthoDB" id="48651at2759"/>
<dbReference type="Proteomes" id="UP000001595">
    <property type="component" value="Unplaced"/>
</dbReference>
<dbReference type="GO" id="GO:0048471">
    <property type="term" value="C:perinuclear region of cytoplasm"/>
    <property type="evidence" value="ECO:0007669"/>
    <property type="project" value="UniProtKB-SubCell"/>
</dbReference>
<dbReference type="GO" id="GO:0003723">
    <property type="term" value="F:RNA binding"/>
    <property type="evidence" value="ECO:0007669"/>
    <property type="project" value="UniProtKB-KW"/>
</dbReference>
<dbReference type="GO" id="GO:0003743">
    <property type="term" value="F:translation initiation factor activity"/>
    <property type="evidence" value="ECO:0007669"/>
    <property type="project" value="UniProtKB-KW"/>
</dbReference>
<dbReference type="CDD" id="cd12401">
    <property type="entry name" value="RRM_eIF4H"/>
    <property type="match status" value="1"/>
</dbReference>
<dbReference type="FunFam" id="3.30.70.330:FF:000115">
    <property type="entry name" value="eukaryotic translation initiation factor 4H"/>
    <property type="match status" value="1"/>
</dbReference>
<dbReference type="Gene3D" id="3.30.70.330">
    <property type="match status" value="1"/>
</dbReference>
<dbReference type="InterPro" id="IPR034229">
    <property type="entry name" value="eIF4H_RRM"/>
</dbReference>
<dbReference type="InterPro" id="IPR012677">
    <property type="entry name" value="Nucleotide-bd_a/b_plait_sf"/>
</dbReference>
<dbReference type="InterPro" id="IPR035979">
    <property type="entry name" value="RBD_domain_sf"/>
</dbReference>
<dbReference type="InterPro" id="IPR000504">
    <property type="entry name" value="RRM_dom"/>
</dbReference>
<dbReference type="PANTHER" id="PTHR23236">
    <property type="entry name" value="EUKARYOTIC TRANSLATION INITIATION FACTOR 4B/4H"/>
    <property type="match status" value="1"/>
</dbReference>
<dbReference type="PANTHER" id="PTHR23236:SF11">
    <property type="entry name" value="EUKARYOTIC TRANSLATION INITIATION FACTOR 4H"/>
    <property type="match status" value="1"/>
</dbReference>
<dbReference type="Pfam" id="PF00076">
    <property type="entry name" value="RRM_1"/>
    <property type="match status" value="1"/>
</dbReference>
<dbReference type="SMART" id="SM00360">
    <property type="entry name" value="RRM"/>
    <property type="match status" value="1"/>
</dbReference>
<dbReference type="SUPFAM" id="SSF54928">
    <property type="entry name" value="RNA-binding domain, RBD"/>
    <property type="match status" value="1"/>
</dbReference>
<dbReference type="PROSITE" id="PS50102">
    <property type="entry name" value="RRM"/>
    <property type="match status" value="1"/>
</dbReference>
<accession>Q5RBR8</accession>
<reference key="1">
    <citation type="submission" date="2004-11" db="EMBL/GenBank/DDBJ databases">
        <authorList>
            <consortium name="The German cDNA consortium"/>
        </authorList>
    </citation>
    <scope>NUCLEOTIDE SEQUENCE [LARGE SCALE MRNA]</scope>
    <source>
        <tissue>Brain cortex</tissue>
    </source>
</reference>
<evidence type="ECO:0000250" key="1"/>
<evidence type="ECO:0000250" key="2">
    <source>
        <dbReference type="UniProtKB" id="Q15056"/>
    </source>
</evidence>
<evidence type="ECO:0000250" key="3">
    <source>
        <dbReference type="UniProtKB" id="Q9WUK2"/>
    </source>
</evidence>
<evidence type="ECO:0000255" key="4">
    <source>
        <dbReference type="PROSITE-ProRule" id="PRU00176"/>
    </source>
</evidence>
<evidence type="ECO:0000256" key="5">
    <source>
        <dbReference type="SAM" id="MobiDB-lite"/>
    </source>
</evidence>
<feature type="initiator methionine" description="Removed" evidence="2">
    <location>
        <position position="1"/>
    </location>
</feature>
<feature type="chain" id="PRO_0000283701" description="Eukaryotic translation initiation factor 4H">
    <location>
        <begin position="2"/>
        <end position="228"/>
    </location>
</feature>
<feature type="domain" description="RRM" evidence="4">
    <location>
        <begin position="42"/>
        <end position="118"/>
    </location>
</feature>
<feature type="region of interest" description="Disordered" evidence="5">
    <location>
        <begin position="1"/>
        <end position="41"/>
    </location>
</feature>
<feature type="region of interest" description="Disordered" evidence="5">
    <location>
        <begin position="122"/>
        <end position="228"/>
    </location>
</feature>
<feature type="compositionally biased region" description="Gly residues" evidence="5">
    <location>
        <begin position="15"/>
        <end position="29"/>
    </location>
</feature>
<feature type="compositionally biased region" description="Basic and acidic residues" evidence="5">
    <location>
        <begin position="131"/>
        <end position="143"/>
    </location>
</feature>
<feature type="compositionally biased region" description="Basic and acidic residues" evidence="5">
    <location>
        <begin position="176"/>
        <end position="187"/>
    </location>
</feature>
<feature type="compositionally biased region" description="Polar residues" evidence="5">
    <location>
        <begin position="200"/>
        <end position="210"/>
    </location>
</feature>
<feature type="compositionally biased region" description="Basic and acidic residues" evidence="5">
    <location>
        <begin position="217"/>
        <end position="228"/>
    </location>
</feature>
<feature type="modified residue" description="N-acetylalanine" evidence="2">
    <location>
        <position position="2"/>
    </location>
</feature>
<feature type="modified residue" description="Phosphoserine" evidence="2">
    <location>
        <position position="14"/>
    </location>
</feature>
<feature type="modified residue" description="Omega-N-methylarginine" evidence="3">
    <location>
        <position position="19"/>
    </location>
</feature>
<feature type="modified residue" description="Phosphoserine" evidence="2">
    <location>
        <position position="21"/>
    </location>
</feature>
<feature type="modified residue" description="Omega-N-methylarginine" evidence="3">
    <location>
        <position position="22"/>
    </location>
</feature>
<feature type="modified residue" description="Phosphoserine" evidence="2">
    <location>
        <position position="24"/>
    </location>
</feature>
<feature type="modified residue" description="Phosphoserine" evidence="2">
    <location>
        <position position="32"/>
    </location>
</feature>
<feature type="modified residue" description="Omega-N-methylarginine" evidence="3">
    <location>
        <position position="136"/>
    </location>
</feature>
<feature type="modified residue" description="Omega-N-methylarginine" evidence="2">
    <location>
        <position position="146"/>
    </location>
</feature>
<feature type="modified residue" description="Omega-N-methylarginine" evidence="3">
    <location>
        <position position="155"/>
    </location>
</feature>
<feature type="modified residue" description="Phosphoserine" evidence="2">
    <location>
        <position position="210"/>
    </location>
</feature>